<organism>
    <name type="scientific">Clostridium botulinum (strain Alaska E43 / Type E3)</name>
    <dbReference type="NCBI Taxonomy" id="508767"/>
    <lineage>
        <taxon>Bacteria</taxon>
        <taxon>Bacillati</taxon>
        <taxon>Bacillota</taxon>
        <taxon>Clostridia</taxon>
        <taxon>Eubacteriales</taxon>
        <taxon>Clostridiaceae</taxon>
        <taxon>Clostridium</taxon>
    </lineage>
</organism>
<reference key="1">
    <citation type="submission" date="2008-05" db="EMBL/GenBank/DDBJ databases">
        <title>Complete genome sequence of Clostridium botulinum E3 str. Alaska E43.</title>
        <authorList>
            <person name="Brinkac L.M."/>
            <person name="Brown J.L."/>
            <person name="Bruce D."/>
            <person name="Detter C."/>
            <person name="Munk C."/>
            <person name="Smith L.A."/>
            <person name="Smith T.J."/>
            <person name="Sutton G."/>
            <person name="Brettin T.S."/>
        </authorList>
    </citation>
    <scope>NUCLEOTIDE SEQUENCE [LARGE SCALE GENOMIC DNA]</scope>
    <source>
        <strain>Alaska E43 / Type E3</strain>
    </source>
</reference>
<accession>B2UYA6</accession>
<evidence type="ECO:0000255" key="1">
    <source>
        <dbReference type="HAMAP-Rule" id="MF_00480"/>
    </source>
</evidence>
<evidence type="ECO:0000305" key="2"/>
<comment type="function">
    <text evidence="1">One of the primary rRNA binding proteins, it binds directly to 16S rRNA where it nucleates assembly of the head domain of the 30S subunit. Is located at the subunit interface close to the decoding center, probably blocks exit of the E-site tRNA.</text>
</comment>
<comment type="subunit">
    <text evidence="1">Part of the 30S ribosomal subunit. Contacts proteins S9 and S11.</text>
</comment>
<comment type="similarity">
    <text evidence="1">Belongs to the universal ribosomal protein uS7 family.</text>
</comment>
<name>RS7_CLOBA</name>
<proteinExistence type="inferred from homology"/>
<gene>
    <name evidence="1" type="primary">rpsG</name>
    <name type="ordered locus">CLH_0233</name>
</gene>
<dbReference type="EMBL" id="CP001078">
    <property type="protein sequence ID" value="ACD52001.1"/>
    <property type="molecule type" value="Genomic_DNA"/>
</dbReference>
<dbReference type="RefSeq" id="WP_003372509.1">
    <property type="nucleotide sequence ID" value="NC_010723.1"/>
</dbReference>
<dbReference type="SMR" id="B2UYA6"/>
<dbReference type="KEGG" id="cbt:CLH_0233"/>
<dbReference type="HOGENOM" id="CLU_072226_1_1_9"/>
<dbReference type="GO" id="GO:0015935">
    <property type="term" value="C:small ribosomal subunit"/>
    <property type="evidence" value="ECO:0007669"/>
    <property type="project" value="InterPro"/>
</dbReference>
<dbReference type="GO" id="GO:0019843">
    <property type="term" value="F:rRNA binding"/>
    <property type="evidence" value="ECO:0007669"/>
    <property type="project" value="UniProtKB-UniRule"/>
</dbReference>
<dbReference type="GO" id="GO:0003735">
    <property type="term" value="F:structural constituent of ribosome"/>
    <property type="evidence" value="ECO:0007669"/>
    <property type="project" value="InterPro"/>
</dbReference>
<dbReference type="GO" id="GO:0000049">
    <property type="term" value="F:tRNA binding"/>
    <property type="evidence" value="ECO:0007669"/>
    <property type="project" value="UniProtKB-UniRule"/>
</dbReference>
<dbReference type="GO" id="GO:0006412">
    <property type="term" value="P:translation"/>
    <property type="evidence" value="ECO:0007669"/>
    <property type="project" value="UniProtKB-UniRule"/>
</dbReference>
<dbReference type="CDD" id="cd14869">
    <property type="entry name" value="uS7_Bacteria"/>
    <property type="match status" value="1"/>
</dbReference>
<dbReference type="FunFam" id="1.10.455.10:FF:000001">
    <property type="entry name" value="30S ribosomal protein S7"/>
    <property type="match status" value="1"/>
</dbReference>
<dbReference type="Gene3D" id="1.10.455.10">
    <property type="entry name" value="Ribosomal protein S7 domain"/>
    <property type="match status" value="1"/>
</dbReference>
<dbReference type="HAMAP" id="MF_00480_B">
    <property type="entry name" value="Ribosomal_uS7_B"/>
    <property type="match status" value="1"/>
</dbReference>
<dbReference type="InterPro" id="IPR000235">
    <property type="entry name" value="Ribosomal_uS7"/>
</dbReference>
<dbReference type="InterPro" id="IPR005717">
    <property type="entry name" value="Ribosomal_uS7_bac/org-type"/>
</dbReference>
<dbReference type="InterPro" id="IPR020606">
    <property type="entry name" value="Ribosomal_uS7_CS"/>
</dbReference>
<dbReference type="InterPro" id="IPR023798">
    <property type="entry name" value="Ribosomal_uS7_dom"/>
</dbReference>
<dbReference type="InterPro" id="IPR036823">
    <property type="entry name" value="Ribosomal_uS7_dom_sf"/>
</dbReference>
<dbReference type="NCBIfam" id="TIGR01029">
    <property type="entry name" value="rpsG_bact"/>
    <property type="match status" value="1"/>
</dbReference>
<dbReference type="PANTHER" id="PTHR11205">
    <property type="entry name" value="RIBOSOMAL PROTEIN S7"/>
    <property type="match status" value="1"/>
</dbReference>
<dbReference type="Pfam" id="PF00177">
    <property type="entry name" value="Ribosomal_S7"/>
    <property type="match status" value="1"/>
</dbReference>
<dbReference type="PIRSF" id="PIRSF002122">
    <property type="entry name" value="RPS7p_RPS7a_RPS5e_RPS7o"/>
    <property type="match status" value="1"/>
</dbReference>
<dbReference type="SUPFAM" id="SSF47973">
    <property type="entry name" value="Ribosomal protein S7"/>
    <property type="match status" value="1"/>
</dbReference>
<dbReference type="PROSITE" id="PS00052">
    <property type="entry name" value="RIBOSOMAL_S7"/>
    <property type="match status" value="1"/>
</dbReference>
<protein>
    <recommendedName>
        <fullName evidence="1">Small ribosomal subunit protein uS7</fullName>
    </recommendedName>
    <alternativeName>
        <fullName evidence="2">30S ribosomal protein S7</fullName>
    </alternativeName>
</protein>
<keyword id="KW-0687">Ribonucleoprotein</keyword>
<keyword id="KW-0689">Ribosomal protein</keyword>
<keyword id="KW-0694">RNA-binding</keyword>
<keyword id="KW-0699">rRNA-binding</keyword>
<keyword id="KW-0820">tRNA-binding</keyword>
<feature type="chain" id="PRO_1000125918" description="Small ribosomal subunit protein uS7">
    <location>
        <begin position="1"/>
        <end position="156"/>
    </location>
</feature>
<sequence>MPRKGHIAKRDVLPDPVYNSKVVTKFINSIMEDGKKGVAQKICYEAFELIAQRSGKEALEVFEEAMNNVMPLLEVKARRIGGATYQVPMEVRTERRQTLGIRWMLIAARKRGEKLMCERVAGELLDASNNTGAAVKKREDTHKMAEANKAFAHYRY</sequence>